<gene>
    <name evidence="1" type="primary">atpC</name>
    <name type="ordered locus">BH3753</name>
</gene>
<feature type="chain" id="PRO_0000188095" description="ATP synthase epsilon chain">
    <location>
        <begin position="1"/>
        <end position="133"/>
    </location>
</feature>
<comment type="function">
    <text evidence="1">Produces ATP from ADP in the presence of a proton gradient across the membrane.</text>
</comment>
<comment type="subunit">
    <text>F-type ATPases have 2 components, CF(1) - the catalytic core - and CF(0) - the membrane proton channel. CF(1) has five subunits: alpha(3), beta(3), gamma(1), delta(1), epsilon(1). CF(0) has three main subunits: a, b and c.</text>
</comment>
<comment type="subcellular location">
    <subcellularLocation>
        <location evidence="1">Cell membrane</location>
        <topology evidence="1">Peripheral membrane protein</topology>
    </subcellularLocation>
</comment>
<comment type="similarity">
    <text evidence="1">Belongs to the ATPase epsilon chain family.</text>
</comment>
<evidence type="ECO:0000255" key="1">
    <source>
        <dbReference type="HAMAP-Rule" id="MF_00530"/>
    </source>
</evidence>
<dbReference type="EMBL" id="BA000004">
    <property type="protein sequence ID" value="BAB07472.1"/>
    <property type="molecule type" value="Genomic_DNA"/>
</dbReference>
<dbReference type="PIR" id="A84119">
    <property type="entry name" value="A84119"/>
</dbReference>
<dbReference type="RefSeq" id="WP_010899878.1">
    <property type="nucleotide sequence ID" value="NC_002570.2"/>
</dbReference>
<dbReference type="SMR" id="Q9K6H6"/>
<dbReference type="STRING" id="272558.gene:10729666"/>
<dbReference type="GeneID" id="87599300"/>
<dbReference type="KEGG" id="bha:BH3753"/>
<dbReference type="eggNOG" id="COG0355">
    <property type="taxonomic scope" value="Bacteria"/>
</dbReference>
<dbReference type="HOGENOM" id="CLU_084338_1_2_9"/>
<dbReference type="OrthoDB" id="9804110at2"/>
<dbReference type="Proteomes" id="UP000001258">
    <property type="component" value="Chromosome"/>
</dbReference>
<dbReference type="GO" id="GO:0005886">
    <property type="term" value="C:plasma membrane"/>
    <property type="evidence" value="ECO:0007669"/>
    <property type="project" value="UniProtKB-SubCell"/>
</dbReference>
<dbReference type="GO" id="GO:0045259">
    <property type="term" value="C:proton-transporting ATP synthase complex"/>
    <property type="evidence" value="ECO:0007669"/>
    <property type="project" value="UniProtKB-KW"/>
</dbReference>
<dbReference type="GO" id="GO:0005524">
    <property type="term" value="F:ATP binding"/>
    <property type="evidence" value="ECO:0007669"/>
    <property type="project" value="UniProtKB-UniRule"/>
</dbReference>
<dbReference type="GO" id="GO:0046933">
    <property type="term" value="F:proton-transporting ATP synthase activity, rotational mechanism"/>
    <property type="evidence" value="ECO:0007669"/>
    <property type="project" value="UniProtKB-UniRule"/>
</dbReference>
<dbReference type="CDD" id="cd12152">
    <property type="entry name" value="F1-ATPase_delta"/>
    <property type="match status" value="1"/>
</dbReference>
<dbReference type="FunFam" id="1.20.5.440:FF:000001">
    <property type="entry name" value="ATP synthase epsilon chain"/>
    <property type="match status" value="1"/>
</dbReference>
<dbReference type="FunFam" id="2.60.15.10:FF:000001">
    <property type="entry name" value="ATP synthase epsilon chain"/>
    <property type="match status" value="1"/>
</dbReference>
<dbReference type="Gene3D" id="1.20.5.440">
    <property type="entry name" value="ATP synthase delta/epsilon subunit, C-terminal domain"/>
    <property type="match status" value="1"/>
</dbReference>
<dbReference type="Gene3D" id="2.60.15.10">
    <property type="entry name" value="F0F1 ATP synthase delta/epsilon subunit, N-terminal"/>
    <property type="match status" value="1"/>
</dbReference>
<dbReference type="HAMAP" id="MF_00530">
    <property type="entry name" value="ATP_synth_epsil_bac"/>
    <property type="match status" value="1"/>
</dbReference>
<dbReference type="InterPro" id="IPR036794">
    <property type="entry name" value="ATP_F1_dsu/esu_C_sf"/>
</dbReference>
<dbReference type="InterPro" id="IPR001469">
    <property type="entry name" value="ATP_synth_F1_dsu/esu"/>
</dbReference>
<dbReference type="InterPro" id="IPR020546">
    <property type="entry name" value="ATP_synth_F1_dsu/esu_N"/>
</dbReference>
<dbReference type="InterPro" id="IPR020547">
    <property type="entry name" value="ATP_synth_F1_esu_C"/>
</dbReference>
<dbReference type="InterPro" id="IPR036771">
    <property type="entry name" value="ATPsynth_dsu/esu_N"/>
</dbReference>
<dbReference type="NCBIfam" id="TIGR01216">
    <property type="entry name" value="ATP_synt_epsi"/>
    <property type="match status" value="1"/>
</dbReference>
<dbReference type="NCBIfam" id="NF001846">
    <property type="entry name" value="PRK00571.1-3"/>
    <property type="match status" value="1"/>
</dbReference>
<dbReference type="NCBIfam" id="NF009977">
    <property type="entry name" value="PRK13442.1"/>
    <property type="match status" value="1"/>
</dbReference>
<dbReference type="NCBIfam" id="NF009980">
    <property type="entry name" value="PRK13446.1"/>
    <property type="match status" value="1"/>
</dbReference>
<dbReference type="PANTHER" id="PTHR13822">
    <property type="entry name" value="ATP SYNTHASE DELTA/EPSILON CHAIN"/>
    <property type="match status" value="1"/>
</dbReference>
<dbReference type="PANTHER" id="PTHR13822:SF10">
    <property type="entry name" value="ATP SYNTHASE EPSILON CHAIN, CHLOROPLASTIC"/>
    <property type="match status" value="1"/>
</dbReference>
<dbReference type="Pfam" id="PF00401">
    <property type="entry name" value="ATP-synt_DE"/>
    <property type="match status" value="1"/>
</dbReference>
<dbReference type="Pfam" id="PF02823">
    <property type="entry name" value="ATP-synt_DE_N"/>
    <property type="match status" value="1"/>
</dbReference>
<dbReference type="SUPFAM" id="SSF46604">
    <property type="entry name" value="Epsilon subunit of F1F0-ATP synthase C-terminal domain"/>
    <property type="match status" value="1"/>
</dbReference>
<dbReference type="SUPFAM" id="SSF51344">
    <property type="entry name" value="Epsilon subunit of F1F0-ATP synthase N-terminal domain"/>
    <property type="match status" value="1"/>
</dbReference>
<keyword id="KW-0066">ATP synthesis</keyword>
<keyword id="KW-1003">Cell membrane</keyword>
<keyword id="KW-0139">CF(1)</keyword>
<keyword id="KW-0375">Hydrogen ion transport</keyword>
<keyword id="KW-0406">Ion transport</keyword>
<keyword id="KW-0472">Membrane</keyword>
<keyword id="KW-1185">Reference proteome</keyword>
<keyword id="KW-0813">Transport</keyword>
<name>ATPE_HALH5</name>
<reference key="1">
    <citation type="journal article" date="2000" name="Nucleic Acids Res.">
        <title>Complete genome sequence of the alkaliphilic bacterium Bacillus halodurans and genomic sequence comparison with Bacillus subtilis.</title>
        <authorList>
            <person name="Takami H."/>
            <person name="Nakasone K."/>
            <person name="Takaki Y."/>
            <person name="Maeno G."/>
            <person name="Sasaki R."/>
            <person name="Masui N."/>
            <person name="Fuji F."/>
            <person name="Hirama C."/>
            <person name="Nakamura Y."/>
            <person name="Ogasawara N."/>
            <person name="Kuhara S."/>
            <person name="Horikoshi K."/>
        </authorList>
    </citation>
    <scope>NUCLEOTIDE SEQUENCE [LARGE SCALE GENOMIC DNA]</scope>
    <source>
        <strain>ATCC BAA-125 / DSM 18197 / FERM 7344 / JCM 9153 / C-125</strain>
    </source>
</reference>
<organism>
    <name type="scientific">Halalkalibacterium halodurans (strain ATCC BAA-125 / DSM 18197 / FERM 7344 / JCM 9153 / C-125)</name>
    <name type="common">Bacillus halodurans</name>
    <dbReference type="NCBI Taxonomy" id="272558"/>
    <lineage>
        <taxon>Bacteria</taxon>
        <taxon>Bacillati</taxon>
        <taxon>Bacillota</taxon>
        <taxon>Bacilli</taxon>
        <taxon>Bacillales</taxon>
        <taxon>Bacillaceae</taxon>
        <taxon>Halalkalibacterium (ex Joshi et al. 2022)</taxon>
    </lineage>
</organism>
<sequence length="133" mass="14491">MPTLHVNVVTPDGKVYEGDVDMVSVKTVEGELGILPRHIPLVAPLTVGAVRLKKGSTVDLVAVSGGFVEVRPDQVTILAEAAELPSDIDVERARSAKERAEKRLQQAKQENIDFKRAELSLRRATNRLDVAGR</sequence>
<accession>Q9K6H6</accession>
<proteinExistence type="inferred from homology"/>
<protein>
    <recommendedName>
        <fullName evidence="1">ATP synthase epsilon chain</fullName>
    </recommendedName>
    <alternativeName>
        <fullName evidence="1">ATP synthase F1 sector epsilon subunit</fullName>
    </alternativeName>
    <alternativeName>
        <fullName evidence="1">F-ATPase epsilon subunit</fullName>
    </alternativeName>
</protein>